<sequence>MLNLIKNVIRSLKSAKIALIALTFLIFVAVGGFVLLNNTVNNFNAAFNYVTHTGKLSNAIINERYDFGKLEFQEQTNNSQNSSDSFTLTLTNDSRTSFINNALRTNPSLYEGLVTQTFSYQNKTEMTEKTNIVNQSKIIAANNLNNALSKDKQLLVSGQLEKLNAVFREYKAINITDKSVFKKLIVSEPNDLVNSLVIFDGQNLSSSKQSDFNNFLNQFNEIKSKGKDNLSTTLKTGQYQAFLQTLFDYAQASETTLKDQLQKLISNPDSSETNQVKNLFDTPSTLTNIGGQLTLQWTENSLTKQIVIFDPSSYETIVAPGNWTYQQQLGKEVYPDINNWESIKKLPLEQFESEFLKIDQKYKISIDNIDYLVIGVGISPDFVYPVFSASLIVPNIENEQLYYVNQTGYERTFSSFLTNPVETAIVARLINLESDLNTINQWAVENMSWPTNIKAAYSSSDTTNILNLLAARTVFIPNLINTINLVALFLTIAILTVAIIVSILILISYLKKNTEQIGILKANGLSGKKINLSLLIFGLIPAIVGAISGYSFGIGFQDVAIHLFSNYWFIPTATSSFSVVGLLFFSLFVILIMSSISLLVGSIILKKDVVKILKHDSEFKVSRLGLSSKKLFARFGIMTRFRVALAFNAPWKLVFLTLMSSFTMMILNLSFATKDSFENAQSKTNLTNQNHQYEFELASATTQSGLLKWQLFAELGTTDKRSESSVKLANKRMDISNVDASKDWKNQQVINFLSDASGFSNDLNYLENIVQSKIGLDYSLGFNNIVSNPWRLSETLMPTNQASASNTAFQNFLKAIITINPSQGSQFIKQTQDPLTKRFIYAIDSDKALKNNNEQNGSQNHLTLNDDFAKFLYSQFELIKKSGNASNEDLNAIDFENPQTIRDFYNKYNALPPLDYKLSFNVIGLPKETIAGQIDTPKYGFLTLHGEYQNTPIKIKGIKDWKDKVDNLGPVLSDQNNHIINQELFKNYSFDPLIVNNSAAKKYQLAIGSEINIAVNNSFKRIDNKIINQDPLVNATFRVVGINNSAHDPEFFTSYSTAFKVLEYPNEWFVKKLPFNSFYANSLLSFVQSTSLFSESGIFPATSSFSTNNTVLVELIKKTINYKNGQMNQTSSNDSSKKENYQKLQKALGISTDLEISKVNEYVAILARVYNGLPYNSTISFISNVAANNALFGNIANTTKQIQAVVIAVIIPIIMLIILLVSTTLIQELKKIAIRLKALGYSNLKILASFLSIYIPLFAFGLLISIPFSIYLIALHNEVIFASSSIFLDAFLSFESAIGSMLVLLAVLSITFVLNWLELNKIKIDKEIKNS</sequence>
<name>Y064_MYCGE</name>
<organism>
    <name type="scientific">Mycoplasma genitalium (strain ATCC 33530 / DSM 19775 / NCTC 10195 / G37)</name>
    <name type="common">Mycoplasmoides genitalium</name>
    <dbReference type="NCBI Taxonomy" id="243273"/>
    <lineage>
        <taxon>Bacteria</taxon>
        <taxon>Bacillati</taxon>
        <taxon>Mycoplasmatota</taxon>
        <taxon>Mycoplasmoidales</taxon>
        <taxon>Mycoplasmoidaceae</taxon>
        <taxon>Mycoplasmoides</taxon>
    </lineage>
</organism>
<keyword id="KW-1003">Cell membrane</keyword>
<keyword id="KW-0472">Membrane</keyword>
<keyword id="KW-1185">Reference proteome</keyword>
<keyword id="KW-0812">Transmembrane</keyword>
<keyword id="KW-1133">Transmembrane helix</keyword>
<keyword id="KW-0813">Transport</keyword>
<protein>
    <recommendedName>
        <fullName>Uncharacterized ABC transporter permease MG064</fullName>
    </recommendedName>
</protein>
<dbReference type="EMBL" id="L43967">
    <property type="protein sequence ID" value="AAC71282.1"/>
    <property type="molecule type" value="Genomic_DNA"/>
</dbReference>
<dbReference type="PIR" id="A64207">
    <property type="entry name" value="A64207"/>
</dbReference>
<dbReference type="RefSeq" id="WP_010869314.1">
    <property type="nucleotide sequence ID" value="NC_000908.2"/>
</dbReference>
<dbReference type="SMR" id="P47310"/>
<dbReference type="STRING" id="243273.MG_064"/>
<dbReference type="GeneID" id="88282183"/>
<dbReference type="KEGG" id="mge:MG_064"/>
<dbReference type="eggNOG" id="COG0577">
    <property type="taxonomic scope" value="Bacteria"/>
</dbReference>
<dbReference type="HOGENOM" id="CLU_256964_0_0_14"/>
<dbReference type="InParanoid" id="P47310"/>
<dbReference type="OrthoDB" id="403889at2"/>
<dbReference type="BioCyc" id="MGEN243273:G1GJ2-69-MONOMER"/>
<dbReference type="Proteomes" id="UP000000807">
    <property type="component" value="Chromosome"/>
</dbReference>
<dbReference type="GO" id="GO:0005886">
    <property type="term" value="C:plasma membrane"/>
    <property type="evidence" value="ECO:0000318"/>
    <property type="project" value="GO_Central"/>
</dbReference>
<dbReference type="GO" id="GO:0022857">
    <property type="term" value="F:transmembrane transporter activity"/>
    <property type="evidence" value="ECO:0000318"/>
    <property type="project" value="GO_Central"/>
</dbReference>
<dbReference type="InterPro" id="IPR003838">
    <property type="entry name" value="ABC3_permease_C"/>
</dbReference>
<dbReference type="InterPro" id="IPR050250">
    <property type="entry name" value="Macrolide_Exporter_MacB"/>
</dbReference>
<dbReference type="PANTHER" id="PTHR30572:SF4">
    <property type="entry name" value="ABC TRANSPORTER PERMEASE YTRF"/>
    <property type="match status" value="1"/>
</dbReference>
<dbReference type="PANTHER" id="PTHR30572">
    <property type="entry name" value="MEMBRANE COMPONENT OF TRANSPORTER-RELATED"/>
    <property type="match status" value="1"/>
</dbReference>
<dbReference type="Pfam" id="PF02687">
    <property type="entry name" value="FtsX"/>
    <property type="match status" value="2"/>
</dbReference>
<evidence type="ECO:0000255" key="1"/>
<evidence type="ECO:0000305" key="2"/>
<accession>P47310</accession>
<reference key="1">
    <citation type="journal article" date="1995" name="Science">
        <title>The minimal gene complement of Mycoplasma genitalium.</title>
        <authorList>
            <person name="Fraser C.M."/>
            <person name="Gocayne J.D."/>
            <person name="White O."/>
            <person name="Adams M.D."/>
            <person name="Clayton R.A."/>
            <person name="Fleischmann R.D."/>
            <person name="Bult C.J."/>
            <person name="Kerlavage A.R."/>
            <person name="Sutton G.G."/>
            <person name="Kelley J.M."/>
            <person name="Fritchman J.L."/>
            <person name="Weidman J.F."/>
            <person name="Small K.V."/>
            <person name="Sandusky M."/>
            <person name="Fuhrmann J.L."/>
            <person name="Nguyen D.T."/>
            <person name="Utterback T.R."/>
            <person name="Saudek D.M."/>
            <person name="Phillips C.A."/>
            <person name="Merrick J.M."/>
            <person name="Tomb J.-F."/>
            <person name="Dougherty B.A."/>
            <person name="Bott K.F."/>
            <person name="Hu P.-C."/>
            <person name="Lucier T.S."/>
            <person name="Peterson S.N."/>
            <person name="Smith H.O."/>
            <person name="Hutchison C.A. III"/>
            <person name="Venter J.C."/>
        </authorList>
    </citation>
    <scope>NUCLEOTIDE SEQUENCE [LARGE SCALE GENOMIC DNA]</scope>
    <source>
        <strain>ATCC 33530 / DSM 19775 / NCTC 10195 / G37</strain>
    </source>
</reference>
<reference key="2">
    <citation type="submission" date="1998-10" db="EMBL/GenBank/DDBJ databases">
        <authorList>
            <person name="Fraser C.M."/>
            <person name="Gocayne J.D."/>
            <person name="White O."/>
            <person name="Adams M.D."/>
            <person name="Clayton R.A."/>
            <person name="Fleischmann R.D."/>
            <person name="Bult C.J."/>
            <person name="Kerlavage A.R."/>
            <person name="Sutton G.G."/>
            <person name="Kelley J.M."/>
            <person name="Fritchman J.L."/>
            <person name="Weidman J.F."/>
            <person name="Small K.V."/>
            <person name="Sandusky M."/>
            <person name="Fuhrmann J.L."/>
            <person name="Nguyen D.T."/>
            <person name="Utterback T.R."/>
            <person name="Saudek D.M."/>
            <person name="Phillips C.A."/>
            <person name="Merrick J.M."/>
            <person name="Tomb J.-F."/>
            <person name="Dougherty B.A."/>
            <person name="Bott K.F."/>
            <person name="Hu P.-C."/>
            <person name="Lucier T.S."/>
            <person name="Peterson S.N."/>
            <person name="Smith H.O."/>
            <person name="Hutchison C.A. III"/>
            <person name="Venter J.C."/>
        </authorList>
    </citation>
    <scope>SEQUENCE REVISION</scope>
</reference>
<proteinExistence type="inferred from homology"/>
<gene>
    <name type="ordered locus">MG064</name>
</gene>
<comment type="subcellular location">
    <subcellularLocation>
        <location evidence="2">Cell membrane</location>
        <topology evidence="2">Multi-pass membrane protein</topology>
    </subcellularLocation>
</comment>
<comment type="similarity">
    <text evidence="2">Belongs to the ABC-4 integral membrane protein family.</text>
</comment>
<feature type="chain" id="PRO_0000210407" description="Uncharacterized ABC transporter permease MG064">
    <location>
        <begin position="1"/>
        <end position="1331"/>
    </location>
</feature>
<feature type="transmembrane region" description="Helical" evidence="1">
    <location>
        <begin position="373"/>
        <end position="393"/>
    </location>
</feature>
<feature type="transmembrane region" description="Helical" evidence="1">
    <location>
        <begin position="487"/>
        <end position="507"/>
    </location>
</feature>
<feature type="transmembrane region" description="Helical" evidence="1">
    <location>
        <begin position="534"/>
        <end position="554"/>
    </location>
</feature>
<feature type="transmembrane region" description="Helical" evidence="1">
    <location>
        <begin position="579"/>
        <end position="599"/>
    </location>
</feature>
<feature type="transmembrane region" description="Helical" evidence="1">
    <location>
        <begin position="653"/>
        <end position="673"/>
    </location>
</feature>
<feature type="transmembrane region" description="Helical" evidence="1">
    <location>
        <begin position="1206"/>
        <end position="1226"/>
    </location>
</feature>
<feature type="transmembrane region" description="Helical" evidence="1">
    <location>
        <begin position="1255"/>
        <end position="1275"/>
    </location>
</feature>
<feature type="transmembrane region" description="Helical" evidence="1">
    <location>
        <begin position="1297"/>
        <end position="1317"/>
    </location>
</feature>